<accession>B9J560</accession>
<reference key="1">
    <citation type="journal article" date="2009" name="J. Bacteriol.">
        <title>Complete genome sequence of the extremophilic Bacillus cereus strain Q1 with industrial applications.</title>
        <authorList>
            <person name="Xiong Z."/>
            <person name="Jiang Y."/>
            <person name="Qi D."/>
            <person name="Lu H."/>
            <person name="Yang F."/>
            <person name="Yang J."/>
            <person name="Chen L."/>
            <person name="Sun L."/>
            <person name="Xu X."/>
            <person name="Xue Y."/>
            <person name="Zhu Y."/>
            <person name="Jin Q."/>
        </authorList>
    </citation>
    <scope>NUCLEOTIDE SEQUENCE [LARGE SCALE GENOMIC DNA]</scope>
    <source>
        <strain>Q1</strain>
    </source>
</reference>
<protein>
    <recommendedName>
        <fullName evidence="1">UPF0178 protein BCQ_2874</fullName>
    </recommendedName>
</protein>
<proteinExistence type="inferred from homology"/>
<dbReference type="EMBL" id="CP000227">
    <property type="protein sequence ID" value="ACM13302.1"/>
    <property type="molecule type" value="Genomic_DNA"/>
</dbReference>
<dbReference type="KEGG" id="bcq:BCQ_2874"/>
<dbReference type="HOGENOM" id="CLU_106619_0_0_9"/>
<dbReference type="Proteomes" id="UP000000441">
    <property type="component" value="Chromosome"/>
</dbReference>
<dbReference type="HAMAP" id="MF_00489">
    <property type="entry name" value="UPF0178"/>
    <property type="match status" value="1"/>
</dbReference>
<dbReference type="InterPro" id="IPR003791">
    <property type="entry name" value="UPF0178"/>
</dbReference>
<dbReference type="NCBIfam" id="NF001095">
    <property type="entry name" value="PRK00124.1"/>
    <property type="match status" value="1"/>
</dbReference>
<dbReference type="PANTHER" id="PTHR35146">
    <property type="entry name" value="UPF0178 PROTEIN YAII"/>
    <property type="match status" value="1"/>
</dbReference>
<dbReference type="PANTHER" id="PTHR35146:SF1">
    <property type="entry name" value="UPF0178 PROTEIN YAII"/>
    <property type="match status" value="1"/>
</dbReference>
<dbReference type="Pfam" id="PF02639">
    <property type="entry name" value="DUF188"/>
    <property type="match status" value="1"/>
</dbReference>
<evidence type="ECO:0000255" key="1">
    <source>
        <dbReference type="HAMAP-Rule" id="MF_00489"/>
    </source>
</evidence>
<feature type="chain" id="PRO_1000197825" description="UPF0178 protein BCQ_2874">
    <location>
        <begin position="1"/>
        <end position="146"/>
    </location>
</feature>
<organism>
    <name type="scientific">Bacillus cereus (strain Q1)</name>
    <dbReference type="NCBI Taxonomy" id="361100"/>
    <lineage>
        <taxon>Bacteria</taxon>
        <taxon>Bacillati</taxon>
        <taxon>Bacillota</taxon>
        <taxon>Bacilli</taxon>
        <taxon>Bacillales</taxon>
        <taxon>Bacillaceae</taxon>
        <taxon>Bacillus</taxon>
        <taxon>Bacillus cereus group</taxon>
    </lineage>
</organism>
<gene>
    <name type="ordered locus">BCQ_2874</name>
</gene>
<sequence length="146" mass="16396">MKIYVDADACPVKDVIIFEATKAEIPVTLVTSFSHYSNAEQPIGVETIYVDSGADAADYRIMQLAQKEDLIITQDYGLASLALAKGCIVLHHKGYKYTNDNIEQLLQTRYLSAMVRKSGKRTKGPKPFTAEDKEKFRALFKSFIVR</sequence>
<name>Y2874_BACCQ</name>
<comment type="similarity">
    <text evidence="1">Belongs to the UPF0178 family.</text>
</comment>